<keyword id="KW-0025">Alternative splicing</keyword>
<keyword id="KW-0130">Cell adhesion</keyword>
<keyword id="KW-1003">Cell membrane</keyword>
<keyword id="KW-0204">Cytolysis</keyword>
<keyword id="KW-0325">Glycoprotein</keyword>
<keyword id="KW-0472">Membrane</keyword>
<keyword id="KW-1185">Reference proteome</keyword>
<keyword id="KW-0964">Secreted</keyword>
<keyword id="KW-0812">Transmembrane</keyword>
<keyword id="KW-1133">Transmembrane helix</keyword>
<gene>
    <name evidence="9 15" type="primary">NijA</name>
    <name evidence="11" type="synonym">ninA</name>
    <name evidence="15" type="ORF">CG6449</name>
</gene>
<sequence length="245" mass="26491">MSNLEHITLEMDKVPLGDNKTLVRNTENISKHSYGGAIDGRTRNTLRVPRAVPETDDDDNDDRPFVKDGNDNPGVDDGLFSTVGGNGGNGGNVNVNVPNGGRRPSFSFPGYNGPGFVTINGVETPIPDVNAYQHKKTLAQGMMDLALLSANANQLRYVLETSSQHPYFYPSLLFISLSIIFQIAVGVGLILNGQYNIKNGHDICRANRINNYTVSGIFIVTVVNVLISAFTVDRDTVPALPANTT</sequence>
<name>NIJA_DROME</name>
<accession>Q8MPP0</accession>
<accession>M9PHZ8</accession>
<accession>Q8MPN9</accession>
<accession>Q8SYI2</accession>
<accession>Q9VTB5</accession>
<feature type="chain" id="PRO_0000452828" description="Ninjurin-A">
    <location>
        <begin position="1"/>
        <end position="245"/>
    </location>
</feature>
<feature type="chain" id="PRO_0000452829" description="Secreted ninjurin-A" evidence="14">
    <location>
        <begin position="1"/>
        <end status="unknown"/>
    </location>
</feature>
<feature type="topological domain" description="Extracellular" evidence="12">
    <location>
        <begin position="1"/>
        <end position="170"/>
    </location>
</feature>
<feature type="transmembrane region" description="Helical; Name=Helix alpha3" evidence="3">
    <location>
        <begin position="171"/>
        <end position="191"/>
    </location>
</feature>
<feature type="topological domain" description="Cytoplasmic" evidence="12">
    <location>
        <begin position="192"/>
        <end position="211"/>
    </location>
</feature>
<feature type="transmembrane region" description="Helical; Name=Helix alpha4" evidence="3">
    <location>
        <begin position="212"/>
        <end position="232"/>
    </location>
</feature>
<feature type="topological domain" description="Extracellular" evidence="12">
    <location>
        <begin position="233"/>
        <end position="245"/>
    </location>
</feature>
<feature type="region of interest" description="Disordered" evidence="5">
    <location>
        <begin position="32"/>
        <end position="101"/>
    </location>
</feature>
<feature type="region of interest" description="Helix alpha1" evidence="2">
    <location>
        <begin position="135"/>
        <end position="146"/>
    </location>
</feature>
<feature type="region of interest" description="Helix alpha2" evidence="2">
    <location>
        <begin position="149"/>
        <end position="165"/>
    </location>
</feature>
<feature type="compositionally biased region" description="Low complexity" evidence="5">
    <location>
        <begin position="92"/>
        <end position="101"/>
    </location>
</feature>
<feature type="glycosylation site" description="N-linked (GlcNAc...) asparagine" evidence="4">
    <location>
        <position position="19"/>
    </location>
</feature>
<feature type="glycosylation site" description="N-linked (GlcNAc...) asparagine" evidence="4">
    <location>
        <position position="28"/>
    </location>
</feature>
<feature type="splice variant" id="VSP_061060" description="In isoform D and isoform A.">
    <location>
        <begin position="23"/>
        <end position="26"/>
    </location>
</feature>
<feature type="splice variant" id="VSP_061061" description="In isoform D and isoform C.">
    <location>
        <begin position="52"/>
        <end position="67"/>
    </location>
</feature>
<evidence type="ECO:0000250" key="1">
    <source>
        <dbReference type="UniProtKB" id="O70131"/>
    </source>
</evidence>
<evidence type="ECO:0000250" key="2">
    <source>
        <dbReference type="UniProtKB" id="Q92982"/>
    </source>
</evidence>
<evidence type="ECO:0000255" key="3"/>
<evidence type="ECO:0000255" key="4">
    <source>
        <dbReference type="PROSITE-ProRule" id="PRU00498"/>
    </source>
</evidence>
<evidence type="ECO:0000256" key="5">
    <source>
        <dbReference type="SAM" id="MobiDB-lite"/>
    </source>
</evidence>
<evidence type="ECO:0000269" key="6">
    <source>
    </source>
</evidence>
<evidence type="ECO:0000269" key="7">
    <source>
    </source>
</evidence>
<evidence type="ECO:0000269" key="8">
    <source>
    </source>
</evidence>
<evidence type="ECO:0000303" key="9">
    <source>
    </source>
</evidence>
<evidence type="ECO:0000303" key="10">
    <source>
    </source>
</evidence>
<evidence type="ECO:0000303" key="11">
    <source ref="1"/>
</evidence>
<evidence type="ECO:0000305" key="12"/>
<evidence type="ECO:0000305" key="13">
    <source>
    </source>
</evidence>
<evidence type="ECO:0000305" key="14">
    <source>
    </source>
</evidence>
<evidence type="ECO:0000312" key="15">
    <source>
        <dbReference type="FlyBase" id="FBgn0036101"/>
    </source>
</evidence>
<organism>
    <name type="scientific">Drosophila melanogaster</name>
    <name type="common">Fruit fly</name>
    <dbReference type="NCBI Taxonomy" id="7227"/>
    <lineage>
        <taxon>Eukaryota</taxon>
        <taxon>Metazoa</taxon>
        <taxon>Ecdysozoa</taxon>
        <taxon>Arthropoda</taxon>
        <taxon>Hexapoda</taxon>
        <taxon>Insecta</taxon>
        <taxon>Pterygota</taxon>
        <taxon>Neoptera</taxon>
        <taxon>Endopterygota</taxon>
        <taxon>Diptera</taxon>
        <taxon>Brachycera</taxon>
        <taxon>Muscomorpha</taxon>
        <taxon>Ephydroidea</taxon>
        <taxon>Drosophilidae</taxon>
        <taxon>Drosophila</taxon>
        <taxon>Sophophora</taxon>
    </lineage>
</organism>
<proteinExistence type="evidence at protein level"/>
<protein>
    <recommendedName>
        <fullName evidence="9 11">Ninjurin-A</fullName>
        <shortName evidence="10">dNINJ-A</shortName>
    </recommendedName>
    <component>
        <recommendedName>
            <fullName evidence="12">Secreted ninjurin-A</fullName>
        </recommendedName>
    </component>
</protein>
<dbReference type="EMBL" id="AJ428205">
    <property type="protein sequence ID" value="CAD21015.1"/>
    <property type="molecule type" value="mRNA"/>
</dbReference>
<dbReference type="EMBL" id="AJ428206">
    <property type="protein sequence ID" value="CAD21016.1"/>
    <property type="molecule type" value="mRNA"/>
</dbReference>
<dbReference type="EMBL" id="AJ428207">
    <property type="protein sequence ID" value="CAD21017.1"/>
    <property type="molecule type" value="mRNA"/>
</dbReference>
<dbReference type="EMBL" id="AE014296">
    <property type="protein sequence ID" value="AAS65042.1"/>
    <property type="molecule type" value="Genomic_DNA"/>
</dbReference>
<dbReference type="EMBL" id="AE014296">
    <property type="protein sequence ID" value="AAS65043.1"/>
    <property type="molecule type" value="Genomic_DNA"/>
</dbReference>
<dbReference type="EMBL" id="AE014296">
    <property type="protein sequence ID" value="AGB94381.1"/>
    <property type="molecule type" value="Genomic_DNA"/>
</dbReference>
<dbReference type="EMBL" id="AE014296">
    <property type="protein sequence ID" value="AAF50137.2"/>
    <property type="molecule type" value="Genomic_DNA"/>
</dbReference>
<dbReference type="EMBL" id="AY071530">
    <property type="protein sequence ID" value="AAL49152.1"/>
    <property type="molecule type" value="mRNA"/>
</dbReference>
<dbReference type="RefSeq" id="NP_001261687.1">
    <molecule id="Q8MPP0-2"/>
    <property type="nucleotide sequence ID" value="NM_001274758.2"/>
</dbReference>
<dbReference type="RefSeq" id="NP_648410.1">
    <molecule id="Q8MPP0-4"/>
    <property type="nucleotide sequence ID" value="NM_140153.5"/>
</dbReference>
<dbReference type="RefSeq" id="NP_996039.1">
    <molecule id="Q8MPP0-3"/>
    <property type="nucleotide sequence ID" value="NM_206317.2"/>
</dbReference>
<dbReference type="RefSeq" id="NP_996040.1">
    <molecule id="Q8MPP0-1"/>
    <property type="nucleotide sequence ID" value="NM_206318.2"/>
</dbReference>
<dbReference type="SMR" id="Q8MPP0"/>
<dbReference type="FunCoup" id="Q8MPP0">
    <property type="interactions" value="18"/>
</dbReference>
<dbReference type="IntAct" id="Q8MPP0">
    <property type="interactions" value="1"/>
</dbReference>
<dbReference type="STRING" id="7227.FBpp0089001"/>
<dbReference type="GlyCosmos" id="Q8MPP0">
    <property type="glycosylation" value="2 sites, No reported glycans"/>
</dbReference>
<dbReference type="GlyGen" id="Q8MPP0">
    <property type="glycosylation" value="2 sites"/>
</dbReference>
<dbReference type="PaxDb" id="7227-FBpp0089001"/>
<dbReference type="DNASU" id="39215"/>
<dbReference type="EnsemblMetazoa" id="FBtr0089569">
    <molecule id="Q8MPP0-4"/>
    <property type="protein sequence ID" value="FBpp0088536"/>
    <property type="gene ID" value="FBgn0036101"/>
</dbReference>
<dbReference type="EnsemblMetazoa" id="FBtr0089570">
    <molecule id="Q8MPP0-1"/>
    <property type="protein sequence ID" value="FBpp0089001"/>
    <property type="gene ID" value="FBgn0036101"/>
</dbReference>
<dbReference type="EnsemblMetazoa" id="FBtr0089571">
    <molecule id="Q8MPP0-3"/>
    <property type="protein sequence ID" value="FBpp0089002"/>
    <property type="gene ID" value="FBgn0036101"/>
</dbReference>
<dbReference type="EnsemblMetazoa" id="FBtr0331575">
    <molecule id="Q8MPP0-2"/>
    <property type="protein sequence ID" value="FBpp0303965"/>
    <property type="gene ID" value="FBgn0036101"/>
</dbReference>
<dbReference type="GeneID" id="39215"/>
<dbReference type="KEGG" id="dme:Dmel_CG6449"/>
<dbReference type="UCSC" id="CG6449-RA">
    <property type="organism name" value="d. melanogaster"/>
</dbReference>
<dbReference type="UCSC" id="CG6449-RB">
    <molecule id="Q8MPP0-1"/>
    <property type="organism name" value="d. melanogaster"/>
</dbReference>
<dbReference type="UCSC" id="CG6449-RC">
    <property type="organism name" value="d. melanogaster"/>
</dbReference>
<dbReference type="AGR" id="FB:FBgn0036101"/>
<dbReference type="CTD" id="39215"/>
<dbReference type="FlyBase" id="FBgn0036101">
    <property type="gene designation" value="NijA"/>
</dbReference>
<dbReference type="VEuPathDB" id="VectorBase:FBgn0036101"/>
<dbReference type="eggNOG" id="ENOG502S12Z">
    <property type="taxonomic scope" value="Eukaryota"/>
</dbReference>
<dbReference type="HOGENOM" id="CLU_074201_1_0_1"/>
<dbReference type="InParanoid" id="Q8MPP0"/>
<dbReference type="OMA" id="ETNTQHP"/>
<dbReference type="OrthoDB" id="6114058at2759"/>
<dbReference type="PhylomeDB" id="Q8MPP0"/>
<dbReference type="BioGRID-ORCS" id="39215">
    <property type="hits" value="0 hits in 3 CRISPR screens"/>
</dbReference>
<dbReference type="ChiTaRS" id="NijA">
    <property type="organism name" value="fly"/>
</dbReference>
<dbReference type="GenomeRNAi" id="39215"/>
<dbReference type="PRO" id="PR:Q8MPP0"/>
<dbReference type="Proteomes" id="UP000000803">
    <property type="component" value="Chromosome 3L"/>
</dbReference>
<dbReference type="Bgee" id="FBgn0036101">
    <property type="expression patterns" value="Expressed in eye disc (Drosophila) and 100 other cell types or tissues"/>
</dbReference>
<dbReference type="ExpressionAtlas" id="Q8MPP0">
    <property type="expression patterns" value="baseline and differential"/>
</dbReference>
<dbReference type="GO" id="GO:0005576">
    <property type="term" value="C:extracellular region"/>
    <property type="evidence" value="ECO:0007669"/>
    <property type="project" value="UniProtKB-SubCell"/>
</dbReference>
<dbReference type="GO" id="GO:0005886">
    <property type="term" value="C:plasma membrane"/>
    <property type="evidence" value="ECO:0000314"/>
    <property type="project" value="UniProtKB"/>
</dbReference>
<dbReference type="GO" id="GO:0007155">
    <property type="term" value="P:cell adhesion"/>
    <property type="evidence" value="ECO:0000314"/>
    <property type="project" value="FlyBase"/>
</dbReference>
<dbReference type="GO" id="GO:0019835">
    <property type="term" value="P:cytolysis"/>
    <property type="evidence" value="ECO:0000314"/>
    <property type="project" value="UniProtKB"/>
</dbReference>
<dbReference type="GO" id="GO:0031640">
    <property type="term" value="P:killing of cells of another organism"/>
    <property type="evidence" value="ECO:0007669"/>
    <property type="project" value="UniProtKB-KW"/>
</dbReference>
<dbReference type="GO" id="GO:0012501">
    <property type="term" value="P:programmed cell death"/>
    <property type="evidence" value="ECO:0000314"/>
    <property type="project" value="UniProtKB"/>
</dbReference>
<dbReference type="GO" id="GO:0042246">
    <property type="term" value="P:tissue regeneration"/>
    <property type="evidence" value="ECO:0007669"/>
    <property type="project" value="InterPro"/>
</dbReference>
<dbReference type="InterPro" id="IPR007007">
    <property type="entry name" value="Ninjurin"/>
</dbReference>
<dbReference type="PANTHER" id="PTHR12316:SF20">
    <property type="entry name" value="NINJURIN-A"/>
    <property type="match status" value="1"/>
</dbReference>
<dbReference type="PANTHER" id="PTHR12316">
    <property type="entry name" value="NINJURIN-RELATED"/>
    <property type="match status" value="1"/>
</dbReference>
<dbReference type="Pfam" id="PF04923">
    <property type="entry name" value="Ninjurin"/>
    <property type="match status" value="1"/>
</dbReference>
<comment type="function">
    <molecule>Ninjurin-A</molecule>
    <text evidence="1 7 8">Effector of non-apoptotic necrotic cell death that mediates plasma membrane rupture (cytolysis): oligomerizes in response to death stimuli and promotes plasma membrane rupture by introducing hydrophilic faces of 2 alpha helices into the hydrophobic membrane, leading to release intracellular molecules that propagate the inflammatory response (PubMed:23028562, PubMed:33472215). Also acts as a homophilic transmembrane adhesion molecule that promotes cell adhesion by mediating homophilic interactions via its extracellular region (By similarity).</text>
</comment>
<comment type="function">
    <molecule>Secreted ninjurin-A</molecule>
    <text evidence="6">Secreted form generated by cleavage, which acts as a negative regulator of cell adhesion (PubMed:16815999). Promotes the loss of cell adhesion in a cell non-autonomous manner (PubMed:16815999).</text>
</comment>
<comment type="subunit">
    <molecule>Ninjurin-A</molecule>
    <text evidence="2">Homooligomer.</text>
</comment>
<comment type="subcellular location">
    <molecule>Ninjurin-A</molecule>
    <subcellularLocation>
        <location evidence="7 13">Cell membrane</location>
        <topology evidence="3">Multi-pass membrane protein</topology>
    </subcellularLocation>
</comment>
<comment type="subcellular location">
    <molecule>Secreted ninjurin-A</molecule>
    <subcellularLocation>
        <location evidence="6">Secreted</location>
    </subcellularLocation>
</comment>
<comment type="alternative products">
    <event type="alternative splicing"/>
    <isoform>
        <id>Q8MPP0-1</id>
        <name>B</name>
        <name evidence="11">Alpha</name>
        <sequence type="displayed"/>
    </isoform>
    <isoform>
        <id>Q8MPP0-2</id>
        <name>D</name>
        <sequence type="described" ref="VSP_061060 VSP_061061"/>
    </isoform>
    <isoform>
        <id>Q8MPP0-3</id>
        <name>C</name>
        <name evidence="11">Beta</name>
        <sequence type="described" ref="VSP_061061"/>
    </isoform>
    <isoform>
        <id>Q8MPP0-4</id>
        <name>A</name>
        <name evidence="11">Gamma</name>
        <sequence type="described" ref="VSP_061060"/>
    </isoform>
</comment>
<comment type="induction">
    <text evidence="6">Up-regulated upon injury.</text>
</comment>
<comment type="domain">
    <molecule>Ninjurin-A</molecule>
    <text evidence="2">Composed of 4 alpha helices: 2 hydrophobic transmembrane regions (alpha3 and alpha4) and 2 alpha helices (alpha1 and alpha2). Alpha1 and alpha2 feature one hydrophobic side and a hydrophilic side. In normal conditions, NijA is inactivated and alpha1 and alpha2 helices are not inserted into the membrane. Following NijA activation, alpha1 and alpha2 helices insert into the membrane and drive NijA oligomerization via interactions between alpha3 and alpha4 and the hydrophobic face of alpha1 from an adjacent subunit. Such structures disrupt membrane integrity and form a lesion through the introduction of the hydrophilic faces of alpha1 and alpha2 into the hydrophobic membrane.</text>
</comment>
<comment type="PTM">
    <molecule>Ninjurin-A</molecule>
    <text evidence="6">Cleaved by Mmp1 protease to generate the Secreted ninjurin-A form.</text>
</comment>
<comment type="disruption phenotype">
    <text evidence="7">No visible phenotype; flies are viable and fertile with no obvious developmental abnormalities.</text>
</comment>
<comment type="similarity">
    <text evidence="12">Belongs to the ninjurin family.</text>
</comment>
<reference key="1">
    <citation type="submission" date="2002-01" db="EMBL/GenBank/DDBJ databases">
        <authorList>
            <person name="Garcia-Alonso L.A."/>
        </authorList>
    </citation>
    <scope>NUCLEOTIDE SEQUENCE [MRNA] (ISOFORMS A; B AND C)</scope>
    <source>
        <strain>Oregon-R</strain>
        <tissue>Epithelium</tissue>
        <tissue>Nervous system</tissue>
    </source>
</reference>
<reference key="2">
    <citation type="journal article" date="2000" name="Science">
        <title>The genome sequence of Drosophila melanogaster.</title>
        <authorList>
            <person name="Adams M.D."/>
            <person name="Celniker S.E."/>
            <person name="Holt R.A."/>
            <person name="Evans C.A."/>
            <person name="Gocayne J.D."/>
            <person name="Amanatides P.G."/>
            <person name="Scherer S.E."/>
            <person name="Li P.W."/>
            <person name="Hoskins R.A."/>
            <person name="Galle R.F."/>
            <person name="George R.A."/>
            <person name="Lewis S.E."/>
            <person name="Richards S."/>
            <person name="Ashburner M."/>
            <person name="Henderson S.N."/>
            <person name="Sutton G.G."/>
            <person name="Wortman J.R."/>
            <person name="Yandell M.D."/>
            <person name="Zhang Q."/>
            <person name="Chen L.X."/>
            <person name="Brandon R.C."/>
            <person name="Rogers Y.-H.C."/>
            <person name="Blazej R.G."/>
            <person name="Champe M."/>
            <person name="Pfeiffer B.D."/>
            <person name="Wan K.H."/>
            <person name="Doyle C."/>
            <person name="Baxter E.G."/>
            <person name="Helt G."/>
            <person name="Nelson C.R."/>
            <person name="Miklos G.L.G."/>
            <person name="Abril J.F."/>
            <person name="Agbayani A."/>
            <person name="An H.-J."/>
            <person name="Andrews-Pfannkoch C."/>
            <person name="Baldwin D."/>
            <person name="Ballew R.M."/>
            <person name="Basu A."/>
            <person name="Baxendale J."/>
            <person name="Bayraktaroglu L."/>
            <person name="Beasley E.M."/>
            <person name="Beeson K.Y."/>
            <person name="Benos P.V."/>
            <person name="Berman B.P."/>
            <person name="Bhandari D."/>
            <person name="Bolshakov S."/>
            <person name="Borkova D."/>
            <person name="Botchan M.R."/>
            <person name="Bouck J."/>
            <person name="Brokstein P."/>
            <person name="Brottier P."/>
            <person name="Burtis K.C."/>
            <person name="Busam D.A."/>
            <person name="Butler H."/>
            <person name="Cadieu E."/>
            <person name="Center A."/>
            <person name="Chandra I."/>
            <person name="Cherry J.M."/>
            <person name="Cawley S."/>
            <person name="Dahlke C."/>
            <person name="Davenport L.B."/>
            <person name="Davies P."/>
            <person name="de Pablos B."/>
            <person name="Delcher A."/>
            <person name="Deng Z."/>
            <person name="Mays A.D."/>
            <person name="Dew I."/>
            <person name="Dietz S.M."/>
            <person name="Dodson K."/>
            <person name="Doup L.E."/>
            <person name="Downes M."/>
            <person name="Dugan-Rocha S."/>
            <person name="Dunkov B.C."/>
            <person name="Dunn P."/>
            <person name="Durbin K.J."/>
            <person name="Evangelista C.C."/>
            <person name="Ferraz C."/>
            <person name="Ferriera S."/>
            <person name="Fleischmann W."/>
            <person name="Fosler C."/>
            <person name="Gabrielian A.E."/>
            <person name="Garg N.S."/>
            <person name="Gelbart W.M."/>
            <person name="Glasser K."/>
            <person name="Glodek A."/>
            <person name="Gong F."/>
            <person name="Gorrell J.H."/>
            <person name="Gu Z."/>
            <person name="Guan P."/>
            <person name="Harris M."/>
            <person name="Harris N.L."/>
            <person name="Harvey D.A."/>
            <person name="Heiman T.J."/>
            <person name="Hernandez J.R."/>
            <person name="Houck J."/>
            <person name="Hostin D."/>
            <person name="Houston K.A."/>
            <person name="Howland T.J."/>
            <person name="Wei M.-H."/>
            <person name="Ibegwam C."/>
            <person name="Jalali M."/>
            <person name="Kalush F."/>
            <person name="Karpen G.H."/>
            <person name="Ke Z."/>
            <person name="Kennison J.A."/>
            <person name="Ketchum K.A."/>
            <person name="Kimmel B.E."/>
            <person name="Kodira C.D."/>
            <person name="Kraft C.L."/>
            <person name="Kravitz S."/>
            <person name="Kulp D."/>
            <person name="Lai Z."/>
            <person name="Lasko P."/>
            <person name="Lei Y."/>
            <person name="Levitsky A.A."/>
            <person name="Li J.H."/>
            <person name="Li Z."/>
            <person name="Liang Y."/>
            <person name="Lin X."/>
            <person name="Liu X."/>
            <person name="Mattei B."/>
            <person name="McIntosh T.C."/>
            <person name="McLeod M.P."/>
            <person name="McPherson D."/>
            <person name="Merkulov G."/>
            <person name="Milshina N.V."/>
            <person name="Mobarry C."/>
            <person name="Morris J."/>
            <person name="Moshrefi A."/>
            <person name="Mount S.M."/>
            <person name="Moy M."/>
            <person name="Murphy B."/>
            <person name="Murphy L."/>
            <person name="Muzny D.M."/>
            <person name="Nelson D.L."/>
            <person name="Nelson D.R."/>
            <person name="Nelson K.A."/>
            <person name="Nixon K."/>
            <person name="Nusskern D.R."/>
            <person name="Pacleb J.M."/>
            <person name="Palazzolo M."/>
            <person name="Pittman G.S."/>
            <person name="Pan S."/>
            <person name="Pollard J."/>
            <person name="Puri V."/>
            <person name="Reese M.G."/>
            <person name="Reinert K."/>
            <person name="Remington K."/>
            <person name="Saunders R.D.C."/>
            <person name="Scheeler F."/>
            <person name="Shen H."/>
            <person name="Shue B.C."/>
            <person name="Siden-Kiamos I."/>
            <person name="Simpson M."/>
            <person name="Skupski M.P."/>
            <person name="Smith T.J."/>
            <person name="Spier E."/>
            <person name="Spradling A.C."/>
            <person name="Stapleton M."/>
            <person name="Strong R."/>
            <person name="Sun E."/>
            <person name="Svirskas R."/>
            <person name="Tector C."/>
            <person name="Turner R."/>
            <person name="Venter E."/>
            <person name="Wang A.H."/>
            <person name="Wang X."/>
            <person name="Wang Z.-Y."/>
            <person name="Wassarman D.A."/>
            <person name="Weinstock G.M."/>
            <person name="Weissenbach J."/>
            <person name="Williams S.M."/>
            <person name="Woodage T."/>
            <person name="Worley K.C."/>
            <person name="Wu D."/>
            <person name="Yang S."/>
            <person name="Yao Q.A."/>
            <person name="Ye J."/>
            <person name="Yeh R.-F."/>
            <person name="Zaveri J.S."/>
            <person name="Zhan M."/>
            <person name="Zhang G."/>
            <person name="Zhao Q."/>
            <person name="Zheng L."/>
            <person name="Zheng X.H."/>
            <person name="Zhong F.N."/>
            <person name="Zhong W."/>
            <person name="Zhou X."/>
            <person name="Zhu S.C."/>
            <person name="Zhu X."/>
            <person name="Smith H.O."/>
            <person name="Gibbs R.A."/>
            <person name="Myers E.W."/>
            <person name="Rubin G.M."/>
            <person name="Venter J.C."/>
        </authorList>
    </citation>
    <scope>NUCLEOTIDE SEQUENCE [LARGE SCALE GENOMIC DNA]</scope>
    <source>
        <strain>Berkeley</strain>
    </source>
</reference>
<reference key="3">
    <citation type="journal article" date="2002" name="Genome Biol.">
        <title>Annotation of the Drosophila melanogaster euchromatic genome: a systematic review.</title>
        <authorList>
            <person name="Misra S."/>
            <person name="Crosby M.A."/>
            <person name="Mungall C.J."/>
            <person name="Matthews B.B."/>
            <person name="Campbell K.S."/>
            <person name="Hradecky P."/>
            <person name="Huang Y."/>
            <person name="Kaminker J.S."/>
            <person name="Millburn G.H."/>
            <person name="Prochnik S.E."/>
            <person name="Smith C.D."/>
            <person name="Tupy J.L."/>
            <person name="Whitfield E.J."/>
            <person name="Bayraktaroglu L."/>
            <person name="Berman B.P."/>
            <person name="Bettencourt B.R."/>
            <person name="Celniker S.E."/>
            <person name="de Grey A.D.N.J."/>
            <person name="Drysdale R.A."/>
            <person name="Harris N.L."/>
            <person name="Richter J."/>
            <person name="Russo S."/>
            <person name="Schroeder A.J."/>
            <person name="Shu S.Q."/>
            <person name="Stapleton M."/>
            <person name="Yamada C."/>
            <person name="Ashburner M."/>
            <person name="Gelbart W.M."/>
            <person name="Rubin G.M."/>
            <person name="Lewis S.E."/>
        </authorList>
    </citation>
    <scope>GENOME REANNOTATION</scope>
    <source>
        <strain>Berkeley</strain>
    </source>
</reference>
<reference key="4">
    <citation type="journal article" date="2006" name="Genes Dev.">
        <title>An MMP liberates the Ninjurin A ectodomain to signal a loss of cell adhesion.</title>
        <authorList>
            <person name="Zhang S."/>
            <person name="Dailey G.M."/>
            <person name="Kwan E."/>
            <person name="Glasheen B.M."/>
            <person name="Sroga G.E."/>
            <person name="Page-McCaw A."/>
        </authorList>
    </citation>
    <scope>FUNCTION</scope>
    <scope>SUBCELLULAR LOCATION</scope>
    <scope>PROTEOLYTIC CLEAVAGE</scope>
    <scope>INDUCTION</scope>
</reference>
<reference key="5">
    <citation type="journal article" date="2012" name="PLoS ONE">
        <title>Drosophila Ninjurin A induces nonapoptotic cell death.</title>
        <authorList>
            <person name="Broderick S."/>
            <person name="Wang X."/>
            <person name="Simms N."/>
            <person name="Page-McCaw A."/>
        </authorList>
    </citation>
    <scope>FUNCTION</scope>
    <scope>SUBCELLULAR LOCATION</scope>
    <scope>DISRUPTION PHENOTYPE</scope>
</reference>
<reference key="6">
    <citation type="journal article" date="2021" name="Nature">
        <title>NINJ1 mediates plasma membrane rupture during lytic cell death.</title>
        <authorList>
            <person name="Kayagaki N."/>
            <person name="Kornfeld O.S."/>
            <person name="Lee B.L."/>
            <person name="Stowe I.B."/>
            <person name="O'Rourke K."/>
            <person name="Li Q."/>
            <person name="Sandoval W."/>
            <person name="Yan D."/>
            <person name="Kang J."/>
            <person name="Xu M."/>
            <person name="Zhang J."/>
            <person name="Lee W.P."/>
            <person name="McKenzie B.S."/>
            <person name="Ulas G."/>
            <person name="Payandeh J."/>
            <person name="Roose-Girma M."/>
            <person name="Modrusan Z."/>
            <person name="Reja R."/>
            <person name="Sagolla M."/>
            <person name="Webster J.D."/>
            <person name="Cho V."/>
            <person name="Andrews T.D."/>
            <person name="Morris L.X."/>
            <person name="Miosge L.A."/>
            <person name="Goodnow C.C."/>
            <person name="Bertram E.M."/>
            <person name="Dixit V.M."/>
        </authorList>
    </citation>
    <scope>FUNCTION</scope>
</reference>